<dbReference type="EC" id="2.4.2.9" evidence="1"/>
<dbReference type="EMBL" id="AE008918">
    <property type="protein sequence ID" value="AAL53473.1"/>
    <property type="molecule type" value="Genomic_DNA"/>
</dbReference>
<dbReference type="PIR" id="AF3538">
    <property type="entry name" value="AF3538"/>
</dbReference>
<dbReference type="RefSeq" id="WP_002965587.1">
    <property type="nucleotide sequence ID" value="NZ_GG703779.1"/>
</dbReference>
<dbReference type="SMR" id="Q8YDE5"/>
<dbReference type="GeneID" id="29595416"/>
<dbReference type="KEGG" id="bme:BMEII0232"/>
<dbReference type="KEGG" id="bmel:DK63_3010"/>
<dbReference type="PATRIC" id="fig|224914.52.peg.3156"/>
<dbReference type="eggNOG" id="COG0035">
    <property type="taxonomic scope" value="Bacteria"/>
</dbReference>
<dbReference type="PhylomeDB" id="Q8YDE5"/>
<dbReference type="UniPathway" id="UPA00574">
    <property type="reaction ID" value="UER00636"/>
</dbReference>
<dbReference type="Proteomes" id="UP000000419">
    <property type="component" value="Chromosome II"/>
</dbReference>
<dbReference type="GO" id="GO:0005525">
    <property type="term" value="F:GTP binding"/>
    <property type="evidence" value="ECO:0007669"/>
    <property type="project" value="UniProtKB-KW"/>
</dbReference>
<dbReference type="GO" id="GO:0000287">
    <property type="term" value="F:magnesium ion binding"/>
    <property type="evidence" value="ECO:0007669"/>
    <property type="project" value="UniProtKB-UniRule"/>
</dbReference>
<dbReference type="GO" id="GO:0004845">
    <property type="term" value="F:uracil phosphoribosyltransferase activity"/>
    <property type="evidence" value="ECO:0007669"/>
    <property type="project" value="UniProtKB-UniRule"/>
</dbReference>
<dbReference type="GO" id="GO:0044206">
    <property type="term" value="P:UMP salvage"/>
    <property type="evidence" value="ECO:0007669"/>
    <property type="project" value="UniProtKB-UniRule"/>
</dbReference>
<dbReference type="GO" id="GO:0006223">
    <property type="term" value="P:uracil salvage"/>
    <property type="evidence" value="ECO:0007669"/>
    <property type="project" value="InterPro"/>
</dbReference>
<dbReference type="CDD" id="cd06223">
    <property type="entry name" value="PRTases_typeI"/>
    <property type="match status" value="1"/>
</dbReference>
<dbReference type="FunFam" id="3.40.50.2020:FF:000003">
    <property type="entry name" value="Uracil phosphoribosyltransferase"/>
    <property type="match status" value="1"/>
</dbReference>
<dbReference type="Gene3D" id="3.40.50.2020">
    <property type="match status" value="1"/>
</dbReference>
<dbReference type="HAMAP" id="MF_01218_B">
    <property type="entry name" value="Upp_B"/>
    <property type="match status" value="1"/>
</dbReference>
<dbReference type="InterPro" id="IPR000836">
    <property type="entry name" value="PRibTrfase_dom"/>
</dbReference>
<dbReference type="InterPro" id="IPR029057">
    <property type="entry name" value="PRTase-like"/>
</dbReference>
<dbReference type="InterPro" id="IPR034332">
    <property type="entry name" value="Upp_B"/>
</dbReference>
<dbReference type="InterPro" id="IPR050054">
    <property type="entry name" value="UPRTase/APRTase"/>
</dbReference>
<dbReference type="InterPro" id="IPR005765">
    <property type="entry name" value="Ura_phspho_trans"/>
</dbReference>
<dbReference type="NCBIfam" id="NF001097">
    <property type="entry name" value="PRK00129.1"/>
    <property type="match status" value="1"/>
</dbReference>
<dbReference type="NCBIfam" id="TIGR01091">
    <property type="entry name" value="upp"/>
    <property type="match status" value="1"/>
</dbReference>
<dbReference type="PANTHER" id="PTHR32315">
    <property type="entry name" value="ADENINE PHOSPHORIBOSYLTRANSFERASE"/>
    <property type="match status" value="1"/>
</dbReference>
<dbReference type="PANTHER" id="PTHR32315:SF4">
    <property type="entry name" value="URACIL PHOSPHORIBOSYLTRANSFERASE, CHLOROPLASTIC"/>
    <property type="match status" value="1"/>
</dbReference>
<dbReference type="Pfam" id="PF14681">
    <property type="entry name" value="UPRTase"/>
    <property type="match status" value="1"/>
</dbReference>
<dbReference type="SUPFAM" id="SSF53271">
    <property type="entry name" value="PRTase-like"/>
    <property type="match status" value="1"/>
</dbReference>
<keyword id="KW-0021">Allosteric enzyme</keyword>
<keyword id="KW-0328">Glycosyltransferase</keyword>
<keyword id="KW-0342">GTP-binding</keyword>
<keyword id="KW-0460">Magnesium</keyword>
<keyword id="KW-0547">Nucleotide-binding</keyword>
<keyword id="KW-0808">Transferase</keyword>
<proteinExistence type="inferred from homology"/>
<feature type="chain" id="PRO_0000120806" description="Uracil phosphoribosyltransferase">
    <location>
        <begin position="1"/>
        <end position="208"/>
    </location>
</feature>
<feature type="binding site" evidence="1">
    <location>
        <position position="78"/>
    </location>
    <ligand>
        <name>5-phospho-alpha-D-ribose 1-diphosphate</name>
        <dbReference type="ChEBI" id="CHEBI:58017"/>
    </ligand>
</feature>
<feature type="binding site" evidence="1">
    <location>
        <position position="103"/>
    </location>
    <ligand>
        <name>5-phospho-alpha-D-ribose 1-diphosphate</name>
        <dbReference type="ChEBI" id="CHEBI:58017"/>
    </ligand>
</feature>
<feature type="binding site" evidence="1">
    <location>
        <begin position="130"/>
        <end position="138"/>
    </location>
    <ligand>
        <name>5-phospho-alpha-D-ribose 1-diphosphate</name>
        <dbReference type="ChEBI" id="CHEBI:58017"/>
    </ligand>
</feature>
<feature type="binding site" evidence="1">
    <location>
        <position position="193"/>
    </location>
    <ligand>
        <name>uracil</name>
        <dbReference type="ChEBI" id="CHEBI:17568"/>
    </ligand>
</feature>
<feature type="binding site" evidence="1">
    <location>
        <begin position="198"/>
        <end position="200"/>
    </location>
    <ligand>
        <name>uracil</name>
        <dbReference type="ChEBI" id="CHEBI:17568"/>
    </ligand>
</feature>
<feature type="binding site" evidence="1">
    <location>
        <position position="199"/>
    </location>
    <ligand>
        <name>5-phospho-alpha-D-ribose 1-diphosphate</name>
        <dbReference type="ChEBI" id="CHEBI:58017"/>
    </ligand>
</feature>
<sequence>MGVTVVSHPLVQHKLTIMRKKETSTASFRRLLKEISLLLCYEVTRNLELTTMSIETPLMPMEAPVLEGKKLVFASILRAGNGLLEGMLDLVPAARVAHIGLYRDHDTLQPIEYYFKAPEDIVNRLVIVVDPMLATANSAIAAIDKLKERGATNIRFLCLLAAPEGIERFTKAHPDVEVFTASIDECLDEKGYIVPGLGDAGDRMYGTK</sequence>
<name>UPP_BRUME</name>
<reference key="1">
    <citation type="journal article" date="2002" name="Proc. Natl. Acad. Sci. U.S.A.">
        <title>The genome sequence of the facultative intracellular pathogen Brucella melitensis.</title>
        <authorList>
            <person name="DelVecchio V.G."/>
            <person name="Kapatral V."/>
            <person name="Redkar R.J."/>
            <person name="Patra G."/>
            <person name="Mujer C."/>
            <person name="Los T."/>
            <person name="Ivanova N."/>
            <person name="Anderson I."/>
            <person name="Bhattacharyya A."/>
            <person name="Lykidis A."/>
            <person name="Reznik G."/>
            <person name="Jablonski L."/>
            <person name="Larsen N."/>
            <person name="D'Souza M."/>
            <person name="Bernal A."/>
            <person name="Mazur M."/>
            <person name="Goltsman E."/>
            <person name="Selkov E."/>
            <person name="Elzer P.H."/>
            <person name="Hagius S."/>
            <person name="O'Callaghan D."/>
            <person name="Letesson J.-J."/>
            <person name="Haselkorn R."/>
            <person name="Kyrpides N.C."/>
            <person name="Overbeek R."/>
        </authorList>
    </citation>
    <scope>NUCLEOTIDE SEQUENCE [LARGE SCALE GENOMIC DNA]</scope>
    <source>
        <strain>ATCC 23456 / CCUG 17765 / NCTC 10094 / 16M</strain>
    </source>
</reference>
<comment type="function">
    <text evidence="1">Catalyzes the conversion of uracil and 5-phospho-alpha-D-ribose 1-diphosphate (PRPP) to UMP and diphosphate.</text>
</comment>
<comment type="catalytic activity">
    <reaction evidence="1">
        <text>UMP + diphosphate = 5-phospho-alpha-D-ribose 1-diphosphate + uracil</text>
        <dbReference type="Rhea" id="RHEA:13017"/>
        <dbReference type="ChEBI" id="CHEBI:17568"/>
        <dbReference type="ChEBI" id="CHEBI:33019"/>
        <dbReference type="ChEBI" id="CHEBI:57865"/>
        <dbReference type="ChEBI" id="CHEBI:58017"/>
        <dbReference type="EC" id="2.4.2.9"/>
    </reaction>
</comment>
<comment type="cofactor">
    <cofactor evidence="1">
        <name>Mg(2+)</name>
        <dbReference type="ChEBI" id="CHEBI:18420"/>
    </cofactor>
    <text evidence="1">Binds 1 Mg(2+) ion per subunit. The magnesium is bound as Mg-PRPP.</text>
</comment>
<comment type="activity regulation">
    <text evidence="1">Allosterically activated by GTP.</text>
</comment>
<comment type="pathway">
    <text evidence="1">Pyrimidine metabolism; UMP biosynthesis via salvage pathway; UMP from uracil: step 1/1.</text>
</comment>
<comment type="similarity">
    <text evidence="1">Belongs to the UPRTase family.</text>
</comment>
<gene>
    <name evidence="1" type="primary">upp</name>
    <name type="ordered locus">BMEII0232</name>
</gene>
<organism>
    <name type="scientific">Brucella melitensis biotype 1 (strain ATCC 23456 / CCUG 17765 / NCTC 10094 / 16M)</name>
    <dbReference type="NCBI Taxonomy" id="224914"/>
    <lineage>
        <taxon>Bacteria</taxon>
        <taxon>Pseudomonadati</taxon>
        <taxon>Pseudomonadota</taxon>
        <taxon>Alphaproteobacteria</taxon>
        <taxon>Hyphomicrobiales</taxon>
        <taxon>Brucellaceae</taxon>
        <taxon>Brucella/Ochrobactrum group</taxon>
        <taxon>Brucella</taxon>
    </lineage>
</organism>
<evidence type="ECO:0000255" key="1">
    <source>
        <dbReference type="HAMAP-Rule" id="MF_01218"/>
    </source>
</evidence>
<protein>
    <recommendedName>
        <fullName evidence="1">Uracil phosphoribosyltransferase</fullName>
        <ecNumber evidence="1">2.4.2.9</ecNumber>
    </recommendedName>
    <alternativeName>
        <fullName evidence="1">UMP pyrophosphorylase</fullName>
    </alternativeName>
    <alternativeName>
        <fullName evidence="1">UPRTase</fullName>
    </alternativeName>
</protein>
<accession>Q8YDE5</accession>